<gene>
    <name evidence="1" type="primary">pyrE</name>
    <name type="ordered locus">slr0185</name>
</gene>
<comment type="function">
    <text evidence="1">Catalyzes the transfer of a ribosyl phosphate group from 5-phosphoribose 1-diphosphate to orotate, leading to the formation of orotidine monophosphate (OMP).</text>
</comment>
<comment type="catalytic activity">
    <reaction evidence="1">
        <text>orotidine 5'-phosphate + diphosphate = orotate + 5-phospho-alpha-D-ribose 1-diphosphate</text>
        <dbReference type="Rhea" id="RHEA:10380"/>
        <dbReference type="ChEBI" id="CHEBI:30839"/>
        <dbReference type="ChEBI" id="CHEBI:33019"/>
        <dbReference type="ChEBI" id="CHEBI:57538"/>
        <dbReference type="ChEBI" id="CHEBI:58017"/>
        <dbReference type="EC" id="2.4.2.10"/>
    </reaction>
</comment>
<comment type="cofactor">
    <cofactor evidence="1">
        <name>Mg(2+)</name>
        <dbReference type="ChEBI" id="CHEBI:18420"/>
    </cofactor>
</comment>
<comment type="pathway">
    <text evidence="1">Pyrimidine metabolism; UMP biosynthesis via de novo pathway; UMP from orotate: step 1/2.</text>
</comment>
<comment type="subunit">
    <text evidence="1">Homodimer.</text>
</comment>
<comment type="similarity">
    <text evidence="1">Belongs to the purine/pyrimidine phosphoribosyltransferase family. PyrE subfamily.</text>
</comment>
<keyword id="KW-0328">Glycosyltransferase</keyword>
<keyword id="KW-0460">Magnesium</keyword>
<keyword id="KW-0665">Pyrimidine biosynthesis</keyword>
<keyword id="KW-1185">Reference proteome</keyword>
<keyword id="KW-0808">Transferase</keyword>
<feature type="chain" id="PRO_0000110758" description="Orotate phosphoribosyltransferase">
    <location>
        <begin position="1"/>
        <end position="198"/>
    </location>
</feature>
<feature type="binding site" evidence="1">
    <location>
        <position position="108"/>
    </location>
    <ligand>
        <name>5-phospho-alpha-D-ribose 1-diphosphate</name>
        <dbReference type="ChEBI" id="CHEBI:58017"/>
        <note>ligand shared between dimeric partners</note>
    </ligand>
</feature>
<feature type="binding site" description="in other chain" evidence="1">
    <location>
        <position position="109"/>
    </location>
    <ligand>
        <name>5-phospho-alpha-D-ribose 1-diphosphate</name>
        <dbReference type="ChEBI" id="CHEBI:58017"/>
        <note>ligand shared between dimeric partners</note>
    </ligand>
</feature>
<feature type="binding site" evidence="1">
    <location>
        <position position="112"/>
    </location>
    <ligand>
        <name>5-phospho-alpha-D-ribose 1-diphosphate</name>
        <dbReference type="ChEBI" id="CHEBI:58017"/>
        <note>ligand shared between dimeric partners</note>
    </ligand>
</feature>
<feature type="binding site" evidence="1">
    <location>
        <position position="114"/>
    </location>
    <ligand>
        <name>5-phospho-alpha-D-ribose 1-diphosphate</name>
        <dbReference type="ChEBI" id="CHEBI:58017"/>
        <note>ligand shared between dimeric partners</note>
    </ligand>
</feature>
<feature type="binding site" description="in other chain" evidence="1">
    <location>
        <begin position="135"/>
        <end position="143"/>
    </location>
    <ligand>
        <name>5-phospho-alpha-D-ribose 1-diphosphate</name>
        <dbReference type="ChEBI" id="CHEBI:58017"/>
        <note>ligand shared between dimeric partners</note>
    </ligand>
</feature>
<feature type="binding site" evidence="1">
    <location>
        <position position="139"/>
    </location>
    <ligand>
        <name>orotate</name>
        <dbReference type="ChEBI" id="CHEBI:30839"/>
    </ligand>
</feature>
<feature type="binding site" evidence="1">
    <location>
        <position position="167"/>
    </location>
    <ligand>
        <name>orotate</name>
        <dbReference type="ChEBI" id="CHEBI:30839"/>
    </ligand>
</feature>
<protein>
    <recommendedName>
        <fullName evidence="1">Orotate phosphoribosyltransferase</fullName>
        <shortName evidence="1">OPRT</shortName>
        <shortName evidence="1">OPRTase</shortName>
        <ecNumber evidence="1">2.4.2.10</ecNumber>
    </recommendedName>
</protein>
<sequence>MTDLTLAALKTAPLAQVRQYLLHLLATHAYKEGDFILSSGQPSTYYINGKLVTLRAEGALAIGRLLLTELPDQVEAVAGLTLGADPIVSAVSTVSAYEEKPVVALIIRKEAKGHGTKAYIEGPELAPGTKVVVLEDVVTTGKSAMLAVERLRNAGYQVDTVISLVDRQQGGREFYQSQGLTFQALFTIGDIQQVYRQK</sequence>
<dbReference type="EC" id="2.4.2.10" evidence="1"/>
<dbReference type="EMBL" id="BA000022">
    <property type="protein sequence ID" value="BAA10077.1"/>
    <property type="molecule type" value="Genomic_DNA"/>
</dbReference>
<dbReference type="PIR" id="S76099">
    <property type="entry name" value="S76099"/>
</dbReference>
<dbReference type="SMR" id="Q55574"/>
<dbReference type="FunCoup" id="Q55574">
    <property type="interactions" value="188"/>
</dbReference>
<dbReference type="STRING" id="1148.gene:10499569"/>
<dbReference type="PaxDb" id="1148-1001452"/>
<dbReference type="EnsemblBacteria" id="BAA10077">
    <property type="protein sequence ID" value="BAA10077"/>
    <property type="gene ID" value="BAA10077"/>
</dbReference>
<dbReference type="KEGG" id="syn:slr0185"/>
<dbReference type="eggNOG" id="COG0461">
    <property type="taxonomic scope" value="Bacteria"/>
</dbReference>
<dbReference type="InParanoid" id="Q55574"/>
<dbReference type="PhylomeDB" id="Q55574"/>
<dbReference type="UniPathway" id="UPA00070">
    <property type="reaction ID" value="UER00119"/>
</dbReference>
<dbReference type="Proteomes" id="UP000001425">
    <property type="component" value="Chromosome"/>
</dbReference>
<dbReference type="GO" id="GO:0000287">
    <property type="term" value="F:magnesium ion binding"/>
    <property type="evidence" value="ECO:0007669"/>
    <property type="project" value="UniProtKB-UniRule"/>
</dbReference>
<dbReference type="GO" id="GO:0004588">
    <property type="term" value="F:orotate phosphoribosyltransferase activity"/>
    <property type="evidence" value="ECO:0000318"/>
    <property type="project" value="GO_Central"/>
</dbReference>
<dbReference type="GO" id="GO:0044205">
    <property type="term" value="P:'de novo' UMP biosynthetic process"/>
    <property type="evidence" value="ECO:0007669"/>
    <property type="project" value="UniProtKB-UniRule"/>
</dbReference>
<dbReference type="GO" id="GO:0019856">
    <property type="term" value="P:pyrimidine nucleobase biosynthetic process"/>
    <property type="evidence" value="ECO:0000318"/>
    <property type="project" value="GO_Central"/>
</dbReference>
<dbReference type="GO" id="GO:0006222">
    <property type="term" value="P:UMP biosynthetic process"/>
    <property type="evidence" value="ECO:0000318"/>
    <property type="project" value="GO_Central"/>
</dbReference>
<dbReference type="CDD" id="cd06223">
    <property type="entry name" value="PRTases_typeI"/>
    <property type="match status" value="1"/>
</dbReference>
<dbReference type="FunFam" id="3.40.50.2020:FF:000029">
    <property type="entry name" value="Orotate phosphoribosyltransferase"/>
    <property type="match status" value="1"/>
</dbReference>
<dbReference type="Gene3D" id="3.40.50.2020">
    <property type="match status" value="1"/>
</dbReference>
<dbReference type="HAMAP" id="MF_01208">
    <property type="entry name" value="PyrE"/>
    <property type="match status" value="1"/>
</dbReference>
<dbReference type="InterPro" id="IPR023031">
    <property type="entry name" value="OPRT"/>
</dbReference>
<dbReference type="InterPro" id="IPR004467">
    <property type="entry name" value="Or_phspho_trans_dom"/>
</dbReference>
<dbReference type="InterPro" id="IPR000836">
    <property type="entry name" value="PRibTrfase_dom"/>
</dbReference>
<dbReference type="InterPro" id="IPR029057">
    <property type="entry name" value="PRTase-like"/>
</dbReference>
<dbReference type="NCBIfam" id="TIGR00336">
    <property type="entry name" value="pyrE"/>
    <property type="match status" value="1"/>
</dbReference>
<dbReference type="PANTHER" id="PTHR19278">
    <property type="entry name" value="OROTATE PHOSPHORIBOSYLTRANSFERASE"/>
    <property type="match status" value="1"/>
</dbReference>
<dbReference type="PANTHER" id="PTHR19278:SF9">
    <property type="entry name" value="URIDINE 5'-MONOPHOSPHATE SYNTHASE"/>
    <property type="match status" value="1"/>
</dbReference>
<dbReference type="SUPFAM" id="SSF53271">
    <property type="entry name" value="PRTase-like"/>
    <property type="match status" value="1"/>
</dbReference>
<dbReference type="PROSITE" id="PS00103">
    <property type="entry name" value="PUR_PYR_PR_TRANSFER"/>
    <property type="match status" value="1"/>
</dbReference>
<organism>
    <name type="scientific">Synechocystis sp. (strain ATCC 27184 / PCC 6803 / Kazusa)</name>
    <dbReference type="NCBI Taxonomy" id="1111708"/>
    <lineage>
        <taxon>Bacteria</taxon>
        <taxon>Bacillati</taxon>
        <taxon>Cyanobacteriota</taxon>
        <taxon>Cyanophyceae</taxon>
        <taxon>Synechococcales</taxon>
        <taxon>Merismopediaceae</taxon>
        <taxon>Synechocystis</taxon>
    </lineage>
</organism>
<accession>Q55574</accession>
<reference key="1">
    <citation type="journal article" date="1995" name="DNA Res.">
        <title>Sequence analysis of the genome of the unicellular cyanobacterium Synechocystis sp. strain PCC6803. I. Sequence features in the 1 Mb region from map positions 64% to 92% of the genome.</title>
        <authorList>
            <person name="Kaneko T."/>
            <person name="Tanaka A."/>
            <person name="Sato S."/>
            <person name="Kotani H."/>
            <person name="Sazuka T."/>
            <person name="Miyajima N."/>
            <person name="Sugiura M."/>
            <person name="Tabata S."/>
        </authorList>
    </citation>
    <scope>NUCLEOTIDE SEQUENCE [LARGE SCALE GENOMIC DNA]</scope>
    <source>
        <strain>ATCC 27184 / PCC 6803 / N-1</strain>
    </source>
</reference>
<reference key="2">
    <citation type="journal article" date="1996" name="DNA Res.">
        <title>Sequence analysis of the genome of the unicellular cyanobacterium Synechocystis sp. strain PCC6803. II. Sequence determination of the entire genome and assignment of potential protein-coding regions.</title>
        <authorList>
            <person name="Kaneko T."/>
            <person name="Sato S."/>
            <person name="Kotani H."/>
            <person name="Tanaka A."/>
            <person name="Asamizu E."/>
            <person name="Nakamura Y."/>
            <person name="Miyajima N."/>
            <person name="Hirosawa M."/>
            <person name="Sugiura M."/>
            <person name="Sasamoto S."/>
            <person name="Kimura T."/>
            <person name="Hosouchi T."/>
            <person name="Matsuno A."/>
            <person name="Muraki A."/>
            <person name="Nakazaki N."/>
            <person name="Naruo K."/>
            <person name="Okumura S."/>
            <person name="Shimpo S."/>
            <person name="Takeuchi C."/>
            <person name="Wada T."/>
            <person name="Watanabe A."/>
            <person name="Yamada M."/>
            <person name="Yasuda M."/>
            <person name="Tabata S."/>
        </authorList>
    </citation>
    <scope>NUCLEOTIDE SEQUENCE [LARGE SCALE GENOMIC DNA]</scope>
    <source>
        <strain>ATCC 27184 / PCC 6803 / Kazusa</strain>
    </source>
</reference>
<evidence type="ECO:0000255" key="1">
    <source>
        <dbReference type="HAMAP-Rule" id="MF_01208"/>
    </source>
</evidence>
<proteinExistence type="inferred from homology"/>
<name>PYRE_SYNY3</name>